<reference key="1">
    <citation type="journal article" date="2009" name="Proc. Natl. Acad. Sci. U.S.A.">
        <title>The genomic basis of trophic strategy in marine bacteria.</title>
        <authorList>
            <person name="Lauro F.M."/>
            <person name="McDougald D."/>
            <person name="Thomas T."/>
            <person name="Williams T.J."/>
            <person name="Egan S."/>
            <person name="Rice S."/>
            <person name="DeMaere M.Z."/>
            <person name="Ting L."/>
            <person name="Ertan H."/>
            <person name="Johnson J."/>
            <person name="Ferriera S."/>
            <person name="Lapidus A."/>
            <person name="Anderson I."/>
            <person name="Kyrpides N."/>
            <person name="Munk A.C."/>
            <person name="Detter C."/>
            <person name="Han C.S."/>
            <person name="Brown M.V."/>
            <person name="Robb F.T."/>
            <person name="Kjelleberg S."/>
            <person name="Cavicchioli R."/>
        </authorList>
    </citation>
    <scope>NUCLEOTIDE SEQUENCE [LARGE SCALE GENOMIC DNA]</scope>
    <source>
        <strain>DSM 13593 / LMG 18877 / RB2256</strain>
    </source>
</reference>
<sequence length="338" mass="36314">MTDLTTPIRTPEDADAALRPKTLAEFVGQAAARENLRIFIEAAKARGDALDHVLFFGPPGLGKTTLAQIVARELGVGFRSTSGPVIAKAGDLAALLTNLEDGDVLFIDEIHRLSPAVEEILYPAMEDRALDIMIGEGPSARSVRIDLPQFTLVGATTRQGLLTTPLRDRFGIPVRLNFYTHAELEQVIGRAARLLGLAIAPDGALEIAKRSRGTPRIAGRLLRRVRDFAAVAGHAIVDARAADAALNRLEVDALGLDAMDRRYLTMIADIYRGGPVGVETLAAGLSEPRDTIEDVIEPYLLQIGLIARTARGRTLNASAWKHLGLNPPAGSQDGLFDK</sequence>
<evidence type="ECO:0000255" key="1">
    <source>
        <dbReference type="HAMAP-Rule" id="MF_00016"/>
    </source>
</evidence>
<comment type="function">
    <text evidence="1">The RuvA-RuvB-RuvC complex processes Holliday junction (HJ) DNA during genetic recombination and DNA repair, while the RuvA-RuvB complex plays an important role in the rescue of blocked DNA replication forks via replication fork reversal (RFR). RuvA specifically binds to HJ cruciform DNA, conferring on it an open structure. The RuvB hexamer acts as an ATP-dependent pump, pulling dsDNA into and through the RuvAB complex. RuvB forms 2 homohexamers on either side of HJ DNA bound by 1 or 2 RuvA tetramers; 4 subunits per hexamer contact DNA at a time. Coordinated motions by a converter formed by DNA-disengaged RuvB subunits stimulates ATP hydrolysis and nucleotide exchange. Immobilization of the converter enables RuvB to convert the ATP-contained energy into a lever motion, pulling 2 nucleotides of DNA out of the RuvA tetramer per ATP hydrolyzed, thus driving DNA branch migration. The RuvB motors rotate together with the DNA substrate, which together with the progressing nucleotide cycle form the mechanistic basis for DNA recombination by continuous HJ branch migration. Branch migration allows RuvC to scan DNA until it finds its consensus sequence, where it cleaves and resolves cruciform DNA.</text>
</comment>
<comment type="catalytic activity">
    <reaction evidence="1">
        <text>ATP + H2O = ADP + phosphate + H(+)</text>
        <dbReference type="Rhea" id="RHEA:13065"/>
        <dbReference type="ChEBI" id="CHEBI:15377"/>
        <dbReference type="ChEBI" id="CHEBI:15378"/>
        <dbReference type="ChEBI" id="CHEBI:30616"/>
        <dbReference type="ChEBI" id="CHEBI:43474"/>
        <dbReference type="ChEBI" id="CHEBI:456216"/>
    </reaction>
</comment>
<comment type="subunit">
    <text evidence="1">Homohexamer. Forms an RuvA(8)-RuvB(12)-Holliday junction (HJ) complex. HJ DNA is sandwiched between 2 RuvA tetramers; dsDNA enters through RuvA and exits via RuvB. An RuvB hexamer assembles on each DNA strand where it exits the tetramer. Each RuvB hexamer is contacted by two RuvA subunits (via domain III) on 2 adjacent RuvB subunits; this complex drives branch migration. In the full resolvosome a probable DNA-RuvA(4)-RuvB(12)-RuvC(2) complex forms which resolves the HJ.</text>
</comment>
<comment type="subcellular location">
    <subcellularLocation>
        <location evidence="1">Cytoplasm</location>
    </subcellularLocation>
</comment>
<comment type="domain">
    <text evidence="1">Has 3 domains, the large (RuvB-L) and small ATPase (RuvB-S) domains and the C-terminal head (RuvB-H) domain. The head domain binds DNA, while the ATPase domains jointly bind ATP, ADP or are empty depending on the state of the subunit in the translocation cycle. During a single DNA translocation step the structure of each domain remains the same, but their relative positions change.</text>
</comment>
<comment type="similarity">
    <text evidence="1">Belongs to the RuvB family.</text>
</comment>
<keyword id="KW-0067">ATP-binding</keyword>
<keyword id="KW-0963">Cytoplasm</keyword>
<keyword id="KW-0227">DNA damage</keyword>
<keyword id="KW-0233">DNA recombination</keyword>
<keyword id="KW-0234">DNA repair</keyword>
<keyword id="KW-0238">DNA-binding</keyword>
<keyword id="KW-0378">Hydrolase</keyword>
<keyword id="KW-0547">Nucleotide-binding</keyword>
<keyword id="KW-1185">Reference proteome</keyword>
<feature type="chain" id="PRO_0000322841" description="Holliday junction branch migration complex subunit RuvB">
    <location>
        <begin position="1"/>
        <end position="338"/>
    </location>
</feature>
<feature type="region of interest" description="Large ATPase domain (RuvB-L)" evidence="1">
    <location>
        <begin position="1"/>
        <end position="179"/>
    </location>
</feature>
<feature type="region of interest" description="Small ATPAse domain (RuvB-S)" evidence="1">
    <location>
        <begin position="180"/>
        <end position="250"/>
    </location>
</feature>
<feature type="region of interest" description="Head domain (RuvB-H)" evidence="1">
    <location>
        <begin position="253"/>
        <end position="338"/>
    </location>
</feature>
<feature type="binding site" evidence="1">
    <location>
        <position position="18"/>
    </location>
    <ligand>
        <name>ATP</name>
        <dbReference type="ChEBI" id="CHEBI:30616"/>
    </ligand>
</feature>
<feature type="binding site" evidence="1">
    <location>
        <position position="19"/>
    </location>
    <ligand>
        <name>ATP</name>
        <dbReference type="ChEBI" id="CHEBI:30616"/>
    </ligand>
</feature>
<feature type="binding site" evidence="1">
    <location>
        <position position="60"/>
    </location>
    <ligand>
        <name>ATP</name>
        <dbReference type="ChEBI" id="CHEBI:30616"/>
    </ligand>
</feature>
<feature type="binding site" evidence="1">
    <location>
        <position position="63"/>
    </location>
    <ligand>
        <name>ATP</name>
        <dbReference type="ChEBI" id="CHEBI:30616"/>
    </ligand>
</feature>
<feature type="binding site" evidence="1">
    <location>
        <position position="64"/>
    </location>
    <ligand>
        <name>ATP</name>
        <dbReference type="ChEBI" id="CHEBI:30616"/>
    </ligand>
</feature>
<feature type="binding site" evidence="1">
    <location>
        <position position="64"/>
    </location>
    <ligand>
        <name>Mg(2+)</name>
        <dbReference type="ChEBI" id="CHEBI:18420"/>
    </ligand>
</feature>
<feature type="binding site" evidence="1">
    <location>
        <position position="65"/>
    </location>
    <ligand>
        <name>ATP</name>
        <dbReference type="ChEBI" id="CHEBI:30616"/>
    </ligand>
</feature>
<feature type="binding site" evidence="1">
    <location>
        <position position="169"/>
    </location>
    <ligand>
        <name>ATP</name>
        <dbReference type="ChEBI" id="CHEBI:30616"/>
    </ligand>
</feature>
<feature type="binding site" evidence="1">
    <location>
        <position position="179"/>
    </location>
    <ligand>
        <name>ATP</name>
        <dbReference type="ChEBI" id="CHEBI:30616"/>
    </ligand>
</feature>
<feature type="binding site" evidence="1">
    <location>
        <position position="216"/>
    </location>
    <ligand>
        <name>ATP</name>
        <dbReference type="ChEBI" id="CHEBI:30616"/>
    </ligand>
</feature>
<feature type="binding site" evidence="1">
    <location>
        <position position="289"/>
    </location>
    <ligand>
        <name>DNA</name>
        <dbReference type="ChEBI" id="CHEBI:16991"/>
    </ligand>
</feature>
<feature type="binding site" evidence="1">
    <location>
        <position position="308"/>
    </location>
    <ligand>
        <name>DNA</name>
        <dbReference type="ChEBI" id="CHEBI:16991"/>
    </ligand>
</feature>
<feature type="binding site" evidence="1">
    <location>
        <position position="313"/>
    </location>
    <ligand>
        <name>DNA</name>
        <dbReference type="ChEBI" id="CHEBI:16991"/>
    </ligand>
</feature>
<proteinExistence type="inferred from homology"/>
<protein>
    <recommendedName>
        <fullName evidence="1">Holliday junction branch migration complex subunit RuvB</fullName>
        <ecNumber evidence="1">3.6.4.-</ecNumber>
    </recommendedName>
</protein>
<gene>
    <name evidence="1" type="primary">ruvB</name>
    <name type="ordered locus">Sala_0333</name>
</gene>
<name>RUVB_SPHAL</name>
<organism>
    <name type="scientific">Sphingopyxis alaskensis (strain DSM 13593 / LMG 18877 / RB2256)</name>
    <name type="common">Sphingomonas alaskensis</name>
    <dbReference type="NCBI Taxonomy" id="317655"/>
    <lineage>
        <taxon>Bacteria</taxon>
        <taxon>Pseudomonadati</taxon>
        <taxon>Pseudomonadota</taxon>
        <taxon>Alphaproteobacteria</taxon>
        <taxon>Sphingomonadales</taxon>
        <taxon>Sphingomonadaceae</taxon>
        <taxon>Sphingopyxis</taxon>
    </lineage>
</organism>
<dbReference type="EC" id="3.6.4.-" evidence="1"/>
<dbReference type="EMBL" id="CP000356">
    <property type="protein sequence ID" value="ABF52056.1"/>
    <property type="molecule type" value="Genomic_DNA"/>
</dbReference>
<dbReference type="RefSeq" id="WP_011540647.1">
    <property type="nucleotide sequence ID" value="NC_008048.1"/>
</dbReference>
<dbReference type="SMR" id="Q1GWB6"/>
<dbReference type="STRING" id="317655.Sala_0333"/>
<dbReference type="KEGG" id="sal:Sala_0333"/>
<dbReference type="eggNOG" id="COG2255">
    <property type="taxonomic scope" value="Bacteria"/>
</dbReference>
<dbReference type="HOGENOM" id="CLU_055599_1_0_5"/>
<dbReference type="OrthoDB" id="9804478at2"/>
<dbReference type="Proteomes" id="UP000006578">
    <property type="component" value="Chromosome"/>
</dbReference>
<dbReference type="GO" id="GO:0005737">
    <property type="term" value="C:cytoplasm"/>
    <property type="evidence" value="ECO:0007669"/>
    <property type="project" value="UniProtKB-SubCell"/>
</dbReference>
<dbReference type="GO" id="GO:0048476">
    <property type="term" value="C:Holliday junction resolvase complex"/>
    <property type="evidence" value="ECO:0007669"/>
    <property type="project" value="UniProtKB-UniRule"/>
</dbReference>
<dbReference type="GO" id="GO:0005524">
    <property type="term" value="F:ATP binding"/>
    <property type="evidence" value="ECO:0007669"/>
    <property type="project" value="UniProtKB-UniRule"/>
</dbReference>
<dbReference type="GO" id="GO:0016887">
    <property type="term" value="F:ATP hydrolysis activity"/>
    <property type="evidence" value="ECO:0007669"/>
    <property type="project" value="InterPro"/>
</dbReference>
<dbReference type="GO" id="GO:0000400">
    <property type="term" value="F:four-way junction DNA binding"/>
    <property type="evidence" value="ECO:0007669"/>
    <property type="project" value="UniProtKB-UniRule"/>
</dbReference>
<dbReference type="GO" id="GO:0009378">
    <property type="term" value="F:four-way junction helicase activity"/>
    <property type="evidence" value="ECO:0007669"/>
    <property type="project" value="InterPro"/>
</dbReference>
<dbReference type="GO" id="GO:0006310">
    <property type="term" value="P:DNA recombination"/>
    <property type="evidence" value="ECO:0007669"/>
    <property type="project" value="UniProtKB-UniRule"/>
</dbReference>
<dbReference type="GO" id="GO:0006281">
    <property type="term" value="P:DNA repair"/>
    <property type="evidence" value="ECO:0007669"/>
    <property type="project" value="UniProtKB-UniRule"/>
</dbReference>
<dbReference type="CDD" id="cd00009">
    <property type="entry name" value="AAA"/>
    <property type="match status" value="1"/>
</dbReference>
<dbReference type="Gene3D" id="1.10.8.60">
    <property type="match status" value="1"/>
</dbReference>
<dbReference type="Gene3D" id="3.40.50.300">
    <property type="entry name" value="P-loop containing nucleotide triphosphate hydrolases"/>
    <property type="match status" value="1"/>
</dbReference>
<dbReference type="Gene3D" id="1.10.10.10">
    <property type="entry name" value="Winged helix-like DNA-binding domain superfamily/Winged helix DNA-binding domain"/>
    <property type="match status" value="1"/>
</dbReference>
<dbReference type="HAMAP" id="MF_00016">
    <property type="entry name" value="DNA_HJ_migration_RuvB"/>
    <property type="match status" value="1"/>
</dbReference>
<dbReference type="InterPro" id="IPR003593">
    <property type="entry name" value="AAA+_ATPase"/>
</dbReference>
<dbReference type="InterPro" id="IPR041445">
    <property type="entry name" value="AAA_lid_4"/>
</dbReference>
<dbReference type="InterPro" id="IPR004605">
    <property type="entry name" value="DNA_helicase_Holl-junc_RuvB"/>
</dbReference>
<dbReference type="InterPro" id="IPR027417">
    <property type="entry name" value="P-loop_NTPase"/>
</dbReference>
<dbReference type="InterPro" id="IPR008824">
    <property type="entry name" value="RuvB-like_N"/>
</dbReference>
<dbReference type="InterPro" id="IPR008823">
    <property type="entry name" value="RuvB_C"/>
</dbReference>
<dbReference type="InterPro" id="IPR036388">
    <property type="entry name" value="WH-like_DNA-bd_sf"/>
</dbReference>
<dbReference type="InterPro" id="IPR036390">
    <property type="entry name" value="WH_DNA-bd_sf"/>
</dbReference>
<dbReference type="NCBIfam" id="NF000868">
    <property type="entry name" value="PRK00080.1"/>
    <property type="match status" value="1"/>
</dbReference>
<dbReference type="NCBIfam" id="TIGR00635">
    <property type="entry name" value="ruvB"/>
    <property type="match status" value="1"/>
</dbReference>
<dbReference type="PANTHER" id="PTHR42848">
    <property type="match status" value="1"/>
</dbReference>
<dbReference type="PANTHER" id="PTHR42848:SF1">
    <property type="entry name" value="HOLLIDAY JUNCTION BRANCH MIGRATION COMPLEX SUBUNIT RUVB"/>
    <property type="match status" value="1"/>
</dbReference>
<dbReference type="Pfam" id="PF17864">
    <property type="entry name" value="AAA_lid_4"/>
    <property type="match status" value="1"/>
</dbReference>
<dbReference type="Pfam" id="PF05491">
    <property type="entry name" value="RuvB_C"/>
    <property type="match status" value="1"/>
</dbReference>
<dbReference type="Pfam" id="PF05496">
    <property type="entry name" value="RuvB_N"/>
    <property type="match status" value="1"/>
</dbReference>
<dbReference type="SMART" id="SM00382">
    <property type="entry name" value="AAA"/>
    <property type="match status" value="1"/>
</dbReference>
<dbReference type="SUPFAM" id="SSF52540">
    <property type="entry name" value="P-loop containing nucleoside triphosphate hydrolases"/>
    <property type="match status" value="1"/>
</dbReference>
<dbReference type="SUPFAM" id="SSF46785">
    <property type="entry name" value="Winged helix' DNA-binding domain"/>
    <property type="match status" value="1"/>
</dbReference>
<accession>Q1GWB6</accession>